<protein>
    <recommendedName>
        <fullName evidence="3">Ornithine aminotransferase</fullName>
        <shortName evidence="2">Orn-AT</shortName>
        <ecNumber evidence="1">2.6.1.13</ecNumber>
    </recommendedName>
    <alternativeName>
        <fullName evidence="2">Ornithine delta-aminotransferase</fullName>
    </alternativeName>
</protein>
<comment type="function">
    <text evidence="1">Catalyzes the conversion of L-ornithine and 2-oxoglutarate to L-glutamate semialdehyde and L-glutamate (PubMed:35337912). L-ornithine is the best substrate, but the enzyme also shows good activity toward L-lysine, and low activity toward D-ornithine, D-lysine, 5-aminovalerate, 6-aminohexanoate and GABA (PubMed:35337912). The enzyme activity is specific for 2-oxoglutarate (PubMed:35337912).</text>
</comment>
<comment type="catalytic activity">
    <reaction evidence="1">
        <text>L-ornithine + 2-oxoglutarate = L-glutamate 5-semialdehyde + L-glutamate</text>
        <dbReference type="Rhea" id="RHEA:25160"/>
        <dbReference type="ChEBI" id="CHEBI:16810"/>
        <dbReference type="ChEBI" id="CHEBI:29985"/>
        <dbReference type="ChEBI" id="CHEBI:46911"/>
        <dbReference type="ChEBI" id="CHEBI:58066"/>
        <dbReference type="EC" id="2.6.1.13"/>
    </reaction>
</comment>
<comment type="catalytic activity">
    <reaction evidence="1">
        <text>L-lysine + 2-oxoglutarate = (S)-2-amino-6-oxohexanoate + L-glutamate</text>
        <dbReference type="Rhea" id="RHEA:21200"/>
        <dbReference type="ChEBI" id="CHEBI:16810"/>
        <dbReference type="ChEBI" id="CHEBI:29985"/>
        <dbReference type="ChEBI" id="CHEBI:32551"/>
        <dbReference type="ChEBI" id="CHEBI:58321"/>
    </reaction>
</comment>
<comment type="cofactor">
    <cofactor evidence="1">
        <name>pyridoxal 5'-phosphate</name>
        <dbReference type="ChEBI" id="CHEBI:597326"/>
    </cofactor>
</comment>
<comment type="biophysicochemical properties">
    <kinetics>
        <KM evidence="1">0.106 mM for L-ornithine (in the presence of 10 mM 2-oxoglutarate)</KM>
        <KM evidence="1">0.211 mM for L-lysine (in the presence of 10 mM 2-oxoglutarate)</KM>
        <KM evidence="1">0.446 mM for D-ornithine (in the presence of 5 mM 2-oxoglutarate)</KM>
        <KM evidence="1">5.22 mM for D-lysine (in the presence of 20 mM 2-oxoglutarate)</KM>
        <KM evidence="1">0.802 mM for 2-oxoglutarate (in the presence of 1 mM L-ornithine)</KM>
        <KM evidence="1">0.624 mM for 2-oxoglutarate (in the presence of 2 mM L-lysine)</KM>
        <KM evidence="1">0.182 mM for 2-oxoglutarate (in the presence of 5 mM D-ornithine)</KM>
        <KM evidence="1">1.23 mM for 2-oxoglutarate (in the presence of 20 mM D-lysine)</KM>
        <text evidence="1">kcat is 4.32 sec(-1) with L-ornithine as substrate. kcat is 1.61 sec(-1) with L-lysine as substrate. kcat is 0.493 sec(-1) with D-ornithine as substrate. kcat is 3.25 sec(-1) with D-lysine as substrate. kcat is 3.51 sec(-1) with 2-oxoglutarate as substrate in the presence of L-ornithine. kcat is 1.41 sec(-1) with 2-oxoglutarate as substrate in the presence of L-lysine. kcat is 0.462 sec(-1) with 2-oxoglutarate as substrate in the presence of D-ornithine. kcat is 3.02 sec(-1) with 2-oxoglutarate as substrate in the presence of D-lysine.</text>
    </kinetics>
    <phDependence>
        <text evidence="1">Optimum pH is 6.5-7.0.</text>
    </phDependence>
    <temperatureDependence>
        <text evidence="1">Optimum temperature is higher than 90 degrees Celsius.</text>
    </temperatureDependence>
</comment>
<comment type="subunit">
    <text evidence="1">Homotetramer; dimer of dimers.</text>
</comment>
<comment type="domain">
    <text evidence="1">A 'Glu switch' mechanism prevents L-ornithine from binding in an orientation that would lead to transamination of the alpha-amino group (PubMed:35337912). The side-chain of Glu-236 forms a salt bridge with that of Arg-419, closing the 'Glu switch' and thus preventing unsuitable L-ornithine binding (PubMed:35337912).</text>
</comment>
<comment type="similarity">
    <text evidence="3">Belongs to the class-III pyridoxal-phosphate-dependent aminotransferase family.</text>
</comment>
<organism>
    <name type="scientific">Pyrococcus horikoshii (strain ATCC 700860 / DSM 12428 / JCM 9974 / NBRC 100139 / OT-3)</name>
    <dbReference type="NCBI Taxonomy" id="70601"/>
    <lineage>
        <taxon>Archaea</taxon>
        <taxon>Methanobacteriati</taxon>
        <taxon>Methanobacteriota</taxon>
        <taxon>Thermococci</taxon>
        <taxon>Thermococcales</taxon>
        <taxon>Thermococcaceae</taxon>
        <taxon>Pyrococcus</taxon>
    </lineage>
</organism>
<accession>O50131</accession>
<reference key="1">
    <citation type="journal article" date="1998" name="DNA Res.">
        <title>Complete sequence and gene organization of the genome of a hyper-thermophilic archaebacterium, Pyrococcus horikoshii OT3.</title>
        <authorList>
            <person name="Kawarabayasi Y."/>
            <person name="Sawada M."/>
            <person name="Horikawa H."/>
            <person name="Haikawa Y."/>
            <person name="Hino Y."/>
            <person name="Yamamoto S."/>
            <person name="Sekine M."/>
            <person name="Baba S."/>
            <person name="Kosugi H."/>
            <person name="Hosoyama A."/>
            <person name="Nagai Y."/>
            <person name="Sakai M."/>
            <person name="Ogura K."/>
            <person name="Otsuka R."/>
            <person name="Nakazawa H."/>
            <person name="Takamiya M."/>
            <person name="Ohfuku Y."/>
            <person name="Funahashi T."/>
            <person name="Tanaka T."/>
            <person name="Kudoh Y."/>
            <person name="Yamazaki J."/>
            <person name="Kushida N."/>
            <person name="Oguchi A."/>
            <person name="Aoki K."/>
            <person name="Yoshizawa T."/>
            <person name="Nakamura Y."/>
            <person name="Robb F.T."/>
            <person name="Horikoshi K."/>
            <person name="Masuchi Y."/>
            <person name="Shizuya H."/>
            <person name="Kikuchi H."/>
        </authorList>
    </citation>
    <scope>NUCLEOTIDE SEQUENCE [LARGE SCALE GENOMIC DNA]</scope>
    <source>
        <strain>ATCC 700860 / DSM 12428 / JCM 9974 / NBRC 100139 / OT-3</strain>
    </source>
</reference>
<reference evidence="6 7 8" key="2">
    <citation type="journal article" date="2022" name="Int. J. Biol. Macromol.">
        <title>Crystal structure of a novel type of ornithine delta-aminotransferase from the hyperthermophilic archaeon Pyrococcus horikoshii.</title>
        <authorList>
            <person name="Kawakami R."/>
            <person name="Ohshida T."/>
            <person name="Hayashi J."/>
            <person name="Yoneda K."/>
            <person name="Furumoto T."/>
            <person name="Ohshima T."/>
            <person name="Sakuraba H."/>
        </authorList>
    </citation>
    <scope>X-RAY CRYSTALLOGRAPHY (1.80 ANGSTROMS) IN COMPLEXES WITH PYRIDOXAL PHOSPHATE; L-ORNITHINE AND REACTION INTERMEDIATE ANALOG PLP-L-GLU</scope>
    <scope>FUNCTION</scope>
    <scope>CATALYTIC ACTIVITY</scope>
    <scope>COFACTOR</scope>
    <scope>BIOPHYSICOCHEMICAL PROPERTIES</scope>
    <scope>SUBUNIT</scope>
    <scope>DOMAIN</scope>
    <scope>MUTAGENESIS OF THR-92 AND ASP-93</scope>
</reference>
<keyword id="KW-0002">3D-structure</keyword>
<keyword id="KW-0032">Aminotransferase</keyword>
<keyword id="KW-0663">Pyridoxal phosphate</keyword>
<keyword id="KW-0808">Transferase</keyword>
<evidence type="ECO:0000269" key="1">
    <source>
    </source>
</evidence>
<evidence type="ECO:0000303" key="2">
    <source>
    </source>
</evidence>
<evidence type="ECO:0000305" key="3"/>
<evidence type="ECO:0000305" key="4">
    <source>
    </source>
</evidence>
<evidence type="ECO:0000312" key="5">
    <source>
        <dbReference type="EMBL" id="BAA30529.1"/>
    </source>
</evidence>
<evidence type="ECO:0007744" key="6">
    <source>
        <dbReference type="PDB" id="7VNO"/>
    </source>
</evidence>
<evidence type="ECO:0007744" key="7">
    <source>
        <dbReference type="PDB" id="7VNT"/>
    </source>
</evidence>
<evidence type="ECO:0007744" key="8">
    <source>
        <dbReference type="PDB" id="7VO1"/>
    </source>
</evidence>
<evidence type="ECO:0007829" key="9">
    <source>
        <dbReference type="PDB" id="7VNO"/>
    </source>
</evidence>
<evidence type="ECO:0007829" key="10">
    <source>
        <dbReference type="PDB" id="7VO1"/>
    </source>
</evidence>
<dbReference type="EC" id="2.6.1.13" evidence="1"/>
<dbReference type="EMBL" id="BA000001">
    <property type="protein sequence ID" value="BAA30529.1"/>
    <property type="molecule type" value="Genomic_DNA"/>
</dbReference>
<dbReference type="PIR" id="A71016">
    <property type="entry name" value="A71016"/>
</dbReference>
<dbReference type="RefSeq" id="WP_010885506.1">
    <property type="nucleotide sequence ID" value="NC_000961.1"/>
</dbReference>
<dbReference type="PDB" id="7VNO">
    <property type="method" value="X-ray"/>
    <property type="resolution" value="1.80 A"/>
    <property type="chains" value="A/B=1-454"/>
</dbReference>
<dbReference type="PDB" id="7VNT">
    <property type="method" value="X-ray"/>
    <property type="resolution" value="1.92 A"/>
    <property type="chains" value="A/B=1-454"/>
</dbReference>
<dbReference type="PDB" id="7VO1">
    <property type="method" value="X-ray"/>
    <property type="resolution" value="2.99 A"/>
    <property type="chains" value="A/B=1-454"/>
</dbReference>
<dbReference type="PDBsum" id="7VNO"/>
<dbReference type="PDBsum" id="7VNT"/>
<dbReference type="PDBsum" id="7VO1"/>
<dbReference type="SMR" id="O50131"/>
<dbReference type="STRING" id="70601.gene:9378399"/>
<dbReference type="EnsemblBacteria" id="BAA30529">
    <property type="protein sequence ID" value="BAA30529"/>
    <property type="gene ID" value="BAA30529"/>
</dbReference>
<dbReference type="GeneID" id="1443744"/>
<dbReference type="KEGG" id="pho:PH1423"/>
<dbReference type="eggNOG" id="arCOG00915">
    <property type="taxonomic scope" value="Archaea"/>
</dbReference>
<dbReference type="OrthoDB" id="6534at2157"/>
<dbReference type="Proteomes" id="UP000000752">
    <property type="component" value="Chromosome"/>
</dbReference>
<dbReference type="GO" id="GO:0042802">
    <property type="term" value="F:identical protein binding"/>
    <property type="evidence" value="ECO:0007669"/>
    <property type="project" value="TreeGrafter"/>
</dbReference>
<dbReference type="GO" id="GO:0030170">
    <property type="term" value="F:pyridoxal phosphate binding"/>
    <property type="evidence" value="ECO:0007669"/>
    <property type="project" value="InterPro"/>
</dbReference>
<dbReference type="GO" id="GO:0008483">
    <property type="term" value="F:transaminase activity"/>
    <property type="evidence" value="ECO:0007669"/>
    <property type="project" value="UniProtKB-KW"/>
</dbReference>
<dbReference type="CDD" id="cd00610">
    <property type="entry name" value="OAT_like"/>
    <property type="match status" value="1"/>
</dbReference>
<dbReference type="FunFam" id="3.40.640.10:FF:000013">
    <property type="entry name" value="4-aminobutyrate aminotransferase"/>
    <property type="match status" value="1"/>
</dbReference>
<dbReference type="Gene3D" id="3.90.1150.10">
    <property type="entry name" value="Aspartate Aminotransferase, domain 1"/>
    <property type="match status" value="1"/>
</dbReference>
<dbReference type="Gene3D" id="3.40.640.10">
    <property type="entry name" value="Type I PLP-dependent aspartate aminotransferase-like (Major domain)"/>
    <property type="match status" value="1"/>
</dbReference>
<dbReference type="InterPro" id="IPR005814">
    <property type="entry name" value="Aminotrans_3"/>
</dbReference>
<dbReference type="InterPro" id="IPR049704">
    <property type="entry name" value="Aminotrans_3_PPA_site"/>
</dbReference>
<dbReference type="InterPro" id="IPR050103">
    <property type="entry name" value="Class-III_PLP-dep_AT"/>
</dbReference>
<dbReference type="InterPro" id="IPR015424">
    <property type="entry name" value="PyrdxlP-dep_Trfase"/>
</dbReference>
<dbReference type="InterPro" id="IPR015421">
    <property type="entry name" value="PyrdxlP-dep_Trfase_major"/>
</dbReference>
<dbReference type="InterPro" id="IPR015422">
    <property type="entry name" value="PyrdxlP-dep_Trfase_small"/>
</dbReference>
<dbReference type="NCBIfam" id="NF004426">
    <property type="entry name" value="PRK05769.1"/>
    <property type="match status" value="1"/>
</dbReference>
<dbReference type="PANTHER" id="PTHR11986">
    <property type="entry name" value="AMINOTRANSFERASE CLASS III"/>
    <property type="match status" value="1"/>
</dbReference>
<dbReference type="PANTHER" id="PTHR11986:SF58">
    <property type="entry name" value="LEUCINE_METHIONINE RACEMASE"/>
    <property type="match status" value="1"/>
</dbReference>
<dbReference type="Pfam" id="PF00202">
    <property type="entry name" value="Aminotran_3"/>
    <property type="match status" value="1"/>
</dbReference>
<dbReference type="PIRSF" id="PIRSF000521">
    <property type="entry name" value="Transaminase_4ab_Lys_Orn"/>
    <property type="match status" value="1"/>
</dbReference>
<dbReference type="SUPFAM" id="SSF53383">
    <property type="entry name" value="PLP-dependent transferases"/>
    <property type="match status" value="1"/>
</dbReference>
<dbReference type="PROSITE" id="PS00600">
    <property type="entry name" value="AA_TRANSFER_CLASS_3"/>
    <property type="match status" value="1"/>
</dbReference>
<sequence>MELKPNVKEIPGPKARKVIEEHHKYMATTTNDPNEYFLVIERAEGVYWIDVDGNVLLDFSSGIGVMNVGLRNPKVIEAIKKQLDLVLHAAGTDYYNPYQVELAKKLVEIAPGDIERKVFLSNSGTEANEAALKIAKWSTNRKMFIAFIGAFHGRTHGTMSLTASKPVQRSRMFPTMPGVVHVPYPNPYRNPWGIDGYENPDELINRVIDYIEEYLFEHYVPAEEVAGIFFEPIQGEGGYVVPPKNFFKELKKLADKHGILLIDDEVQMGMGRTGRMWAIEHFDIVPDIVTVAKALGGGIPIGATIFRADLDFGVSGVHSNTFGGNTVAAAAALAVIEELQNGLIENAQKLEPLFRERLEEMKEKYEIIGDVRGLGLAWGVEFVKDRKTKEYATKERGEIVVEALKRGLALLGCGKSAIRLIPPLIISEEEAKMGLDIFEEAIKVVSERHGYKIH</sequence>
<proteinExistence type="evidence at protein level"/>
<feature type="chain" id="PRO_0000458674" description="Ornithine aminotransferase">
    <location>
        <begin position="1"/>
        <end position="454"/>
    </location>
</feature>
<feature type="binding site" evidence="1 6 7">
    <location>
        <position position="124"/>
    </location>
    <ligand>
        <name>pyridoxal 5'-phosphate</name>
        <dbReference type="ChEBI" id="CHEBI:597326"/>
    </ligand>
</feature>
<feature type="binding site" evidence="1 6 7">
    <location>
        <position position="125"/>
    </location>
    <ligand>
        <name>pyridoxal 5'-phosphate</name>
        <dbReference type="ChEBI" id="CHEBI:597326"/>
    </ligand>
</feature>
<feature type="binding site" evidence="1 6 7">
    <location>
        <position position="267"/>
    </location>
    <ligand>
        <name>pyridoxal 5'-phosphate</name>
        <dbReference type="ChEBI" id="CHEBI:597326"/>
    </ligand>
</feature>
<feature type="binding site" evidence="1 6 7">
    <location>
        <position position="321"/>
    </location>
    <ligand>
        <name>pyridoxal 5'-phosphate</name>
        <dbReference type="ChEBI" id="CHEBI:597326"/>
    </ligand>
</feature>
<feature type="site" description="Plays critical role in maintaining high affinity for the substrate" evidence="4">
    <location>
        <position position="93"/>
    </location>
</feature>
<feature type="modified residue" description="N6-(pyridoxal phosphate)lysine" evidence="1 7">
    <location>
        <position position="293"/>
    </location>
</feature>
<feature type="mutagenesis site" description="Slightly increases the specific activity. Increases KM for L-ornithine." evidence="1">
    <original>T</original>
    <variation>V</variation>
    <location>
        <position position="92"/>
    </location>
</feature>
<feature type="mutagenesis site" description="Reduces the specific activity. Increases KM for L-ornithine." evidence="1">
    <original>D</original>
    <variation>L</variation>
    <location>
        <position position="93"/>
    </location>
</feature>
<feature type="strand" evidence="9">
    <location>
        <begin position="8"/>
        <end position="11"/>
    </location>
</feature>
<feature type="helix" evidence="9">
    <location>
        <begin position="13"/>
        <end position="25"/>
    </location>
</feature>
<feature type="turn" evidence="9">
    <location>
        <begin position="33"/>
        <end position="35"/>
    </location>
</feature>
<feature type="strand" evidence="9">
    <location>
        <begin position="39"/>
        <end position="44"/>
    </location>
</feature>
<feature type="strand" evidence="9">
    <location>
        <begin position="47"/>
        <end position="50"/>
    </location>
</feature>
<feature type="strand" evidence="9">
    <location>
        <begin position="55"/>
        <end position="60"/>
    </location>
</feature>
<feature type="helix" evidence="9">
    <location>
        <begin position="61"/>
        <end position="64"/>
    </location>
</feature>
<feature type="helix" evidence="9">
    <location>
        <begin position="73"/>
        <end position="83"/>
    </location>
</feature>
<feature type="turn" evidence="9">
    <location>
        <begin position="91"/>
        <end position="93"/>
    </location>
</feature>
<feature type="helix" evidence="9">
    <location>
        <begin position="97"/>
        <end position="109"/>
    </location>
</feature>
<feature type="strand" evidence="9">
    <location>
        <begin position="110"/>
        <end position="114"/>
    </location>
</feature>
<feature type="strand" evidence="9">
    <location>
        <begin position="116"/>
        <end position="123"/>
    </location>
</feature>
<feature type="helix" evidence="9">
    <location>
        <begin position="124"/>
        <end position="139"/>
    </location>
</feature>
<feature type="strand" evidence="9">
    <location>
        <begin position="143"/>
        <end position="147"/>
    </location>
</feature>
<feature type="helix" evidence="9">
    <location>
        <begin position="156"/>
        <end position="161"/>
    </location>
</feature>
<feature type="helix" evidence="9">
    <location>
        <begin position="166"/>
        <end position="169"/>
    </location>
</feature>
<feature type="turn" evidence="9">
    <location>
        <begin position="170"/>
        <end position="172"/>
    </location>
</feature>
<feature type="strand" evidence="9">
    <location>
        <begin position="179"/>
        <end position="182"/>
    </location>
</feature>
<feature type="strand" evidence="9">
    <location>
        <begin position="187"/>
        <end position="189"/>
    </location>
</feature>
<feature type="turn" evidence="9">
    <location>
        <begin position="196"/>
        <end position="198"/>
    </location>
</feature>
<feature type="helix" evidence="9">
    <location>
        <begin position="200"/>
        <end position="214"/>
    </location>
</feature>
<feature type="turn" evidence="9">
    <location>
        <begin position="215"/>
        <end position="219"/>
    </location>
</feature>
<feature type="helix" evidence="9">
    <location>
        <begin position="222"/>
        <end position="224"/>
    </location>
</feature>
<feature type="strand" evidence="9">
    <location>
        <begin position="225"/>
        <end position="230"/>
    </location>
</feature>
<feature type="strand" evidence="9">
    <location>
        <begin position="232"/>
        <end position="234"/>
    </location>
</feature>
<feature type="turn" evidence="9">
    <location>
        <begin position="235"/>
        <end position="238"/>
    </location>
</feature>
<feature type="helix" evidence="9">
    <location>
        <begin position="246"/>
        <end position="256"/>
    </location>
</feature>
<feature type="strand" evidence="9">
    <location>
        <begin position="260"/>
        <end position="264"/>
    </location>
</feature>
<feature type="turn" evidence="9">
    <location>
        <begin position="266"/>
        <end position="273"/>
    </location>
</feature>
<feature type="strand" evidence="9">
    <location>
        <begin position="274"/>
        <end position="277"/>
    </location>
</feature>
<feature type="helix" evidence="9">
    <location>
        <begin position="278"/>
        <end position="282"/>
    </location>
</feature>
<feature type="strand" evidence="9">
    <location>
        <begin position="287"/>
        <end position="292"/>
    </location>
</feature>
<feature type="helix" evidence="9">
    <location>
        <begin position="293"/>
        <end position="296"/>
    </location>
</feature>
<feature type="strand" evidence="9">
    <location>
        <begin position="302"/>
        <end position="307"/>
    </location>
</feature>
<feature type="helix" evidence="9">
    <location>
        <begin position="308"/>
        <end position="310"/>
    </location>
</feature>
<feature type="strand" evidence="10">
    <location>
        <begin position="313"/>
        <end position="318"/>
    </location>
</feature>
<feature type="helix" evidence="9">
    <location>
        <begin position="326"/>
        <end position="340"/>
    </location>
</feature>
<feature type="helix" evidence="9">
    <location>
        <begin position="343"/>
        <end position="364"/>
    </location>
</feature>
<feature type="strand" evidence="9">
    <location>
        <begin position="368"/>
        <end position="374"/>
    </location>
</feature>
<feature type="strand" evidence="9">
    <location>
        <begin position="377"/>
        <end position="384"/>
    </location>
</feature>
<feature type="turn" evidence="9">
    <location>
        <begin position="386"/>
        <end position="388"/>
    </location>
</feature>
<feature type="helix" evidence="9">
    <location>
        <begin position="393"/>
        <end position="405"/>
    </location>
</feature>
<feature type="strand" evidence="9">
    <location>
        <begin position="411"/>
        <end position="413"/>
    </location>
</feature>
<feature type="turn" evidence="9">
    <location>
        <begin position="414"/>
        <end position="416"/>
    </location>
</feature>
<feature type="strand" evidence="9">
    <location>
        <begin position="417"/>
        <end position="420"/>
    </location>
</feature>
<feature type="helix" evidence="9">
    <location>
        <begin position="428"/>
        <end position="449"/>
    </location>
</feature>
<name>ORNAT_PYRHO</name>
<gene>
    <name evidence="5" type="ordered locus">PH1423</name>
</gene>